<proteinExistence type="evidence at protein level"/>
<reference evidence="8" key="1">
    <citation type="journal article" date="2005" name="Science">
        <title>The transcriptional landscape of the mammalian genome.</title>
        <authorList>
            <person name="Carninci P."/>
            <person name="Kasukawa T."/>
            <person name="Katayama S."/>
            <person name="Gough J."/>
            <person name="Frith M.C."/>
            <person name="Maeda N."/>
            <person name="Oyama R."/>
            <person name="Ravasi T."/>
            <person name="Lenhard B."/>
            <person name="Wells C."/>
            <person name="Kodzius R."/>
            <person name="Shimokawa K."/>
            <person name="Bajic V.B."/>
            <person name="Brenner S.E."/>
            <person name="Batalov S."/>
            <person name="Forrest A.R."/>
            <person name="Zavolan M."/>
            <person name="Davis M.J."/>
            <person name="Wilming L.G."/>
            <person name="Aidinis V."/>
            <person name="Allen J.E."/>
            <person name="Ambesi-Impiombato A."/>
            <person name="Apweiler R."/>
            <person name="Aturaliya R.N."/>
            <person name="Bailey T.L."/>
            <person name="Bansal M."/>
            <person name="Baxter L."/>
            <person name="Beisel K.W."/>
            <person name="Bersano T."/>
            <person name="Bono H."/>
            <person name="Chalk A.M."/>
            <person name="Chiu K.P."/>
            <person name="Choudhary V."/>
            <person name="Christoffels A."/>
            <person name="Clutterbuck D.R."/>
            <person name="Crowe M.L."/>
            <person name="Dalla E."/>
            <person name="Dalrymple B.P."/>
            <person name="de Bono B."/>
            <person name="Della Gatta G."/>
            <person name="di Bernardo D."/>
            <person name="Down T."/>
            <person name="Engstrom P."/>
            <person name="Fagiolini M."/>
            <person name="Faulkner G."/>
            <person name="Fletcher C.F."/>
            <person name="Fukushima T."/>
            <person name="Furuno M."/>
            <person name="Futaki S."/>
            <person name="Gariboldi M."/>
            <person name="Georgii-Hemming P."/>
            <person name="Gingeras T.R."/>
            <person name="Gojobori T."/>
            <person name="Green R.E."/>
            <person name="Gustincich S."/>
            <person name="Harbers M."/>
            <person name="Hayashi Y."/>
            <person name="Hensch T.K."/>
            <person name="Hirokawa N."/>
            <person name="Hill D."/>
            <person name="Huminiecki L."/>
            <person name="Iacono M."/>
            <person name="Ikeo K."/>
            <person name="Iwama A."/>
            <person name="Ishikawa T."/>
            <person name="Jakt M."/>
            <person name="Kanapin A."/>
            <person name="Katoh M."/>
            <person name="Kawasawa Y."/>
            <person name="Kelso J."/>
            <person name="Kitamura H."/>
            <person name="Kitano H."/>
            <person name="Kollias G."/>
            <person name="Krishnan S.P."/>
            <person name="Kruger A."/>
            <person name="Kummerfeld S.K."/>
            <person name="Kurochkin I.V."/>
            <person name="Lareau L.F."/>
            <person name="Lazarevic D."/>
            <person name="Lipovich L."/>
            <person name="Liu J."/>
            <person name="Liuni S."/>
            <person name="McWilliam S."/>
            <person name="Madan Babu M."/>
            <person name="Madera M."/>
            <person name="Marchionni L."/>
            <person name="Matsuda H."/>
            <person name="Matsuzawa S."/>
            <person name="Miki H."/>
            <person name="Mignone F."/>
            <person name="Miyake S."/>
            <person name="Morris K."/>
            <person name="Mottagui-Tabar S."/>
            <person name="Mulder N."/>
            <person name="Nakano N."/>
            <person name="Nakauchi H."/>
            <person name="Ng P."/>
            <person name="Nilsson R."/>
            <person name="Nishiguchi S."/>
            <person name="Nishikawa S."/>
            <person name="Nori F."/>
            <person name="Ohara O."/>
            <person name="Okazaki Y."/>
            <person name="Orlando V."/>
            <person name="Pang K.C."/>
            <person name="Pavan W.J."/>
            <person name="Pavesi G."/>
            <person name="Pesole G."/>
            <person name="Petrovsky N."/>
            <person name="Piazza S."/>
            <person name="Reed J."/>
            <person name="Reid J.F."/>
            <person name="Ring B.Z."/>
            <person name="Ringwald M."/>
            <person name="Rost B."/>
            <person name="Ruan Y."/>
            <person name="Salzberg S.L."/>
            <person name="Sandelin A."/>
            <person name="Schneider C."/>
            <person name="Schoenbach C."/>
            <person name="Sekiguchi K."/>
            <person name="Semple C.A."/>
            <person name="Seno S."/>
            <person name="Sessa L."/>
            <person name="Sheng Y."/>
            <person name="Shibata Y."/>
            <person name="Shimada H."/>
            <person name="Shimada K."/>
            <person name="Silva D."/>
            <person name="Sinclair B."/>
            <person name="Sperling S."/>
            <person name="Stupka E."/>
            <person name="Sugiura K."/>
            <person name="Sultana R."/>
            <person name="Takenaka Y."/>
            <person name="Taki K."/>
            <person name="Tammoja K."/>
            <person name="Tan S.L."/>
            <person name="Tang S."/>
            <person name="Taylor M.S."/>
            <person name="Tegner J."/>
            <person name="Teichmann S.A."/>
            <person name="Ueda H.R."/>
            <person name="van Nimwegen E."/>
            <person name="Verardo R."/>
            <person name="Wei C.L."/>
            <person name="Yagi K."/>
            <person name="Yamanishi H."/>
            <person name="Zabarovsky E."/>
            <person name="Zhu S."/>
            <person name="Zimmer A."/>
            <person name="Hide W."/>
            <person name="Bult C."/>
            <person name="Grimmond S.M."/>
            <person name="Teasdale R.D."/>
            <person name="Liu E.T."/>
            <person name="Brusic V."/>
            <person name="Quackenbush J."/>
            <person name="Wahlestedt C."/>
            <person name="Mattick J.S."/>
            <person name="Hume D.A."/>
            <person name="Kai C."/>
            <person name="Sasaki D."/>
            <person name="Tomaru Y."/>
            <person name="Fukuda S."/>
            <person name="Kanamori-Katayama M."/>
            <person name="Suzuki M."/>
            <person name="Aoki J."/>
            <person name="Arakawa T."/>
            <person name="Iida J."/>
            <person name="Imamura K."/>
            <person name="Itoh M."/>
            <person name="Kato T."/>
            <person name="Kawaji H."/>
            <person name="Kawagashira N."/>
            <person name="Kawashima T."/>
            <person name="Kojima M."/>
            <person name="Kondo S."/>
            <person name="Konno H."/>
            <person name="Nakano K."/>
            <person name="Ninomiya N."/>
            <person name="Nishio T."/>
            <person name="Okada M."/>
            <person name="Plessy C."/>
            <person name="Shibata K."/>
            <person name="Shiraki T."/>
            <person name="Suzuki S."/>
            <person name="Tagami M."/>
            <person name="Waki K."/>
            <person name="Watahiki A."/>
            <person name="Okamura-Oho Y."/>
            <person name="Suzuki H."/>
            <person name="Kawai J."/>
            <person name="Hayashizaki Y."/>
        </authorList>
    </citation>
    <scope>NUCLEOTIDE SEQUENCE [LARGE SCALE MRNA]</scope>
    <source>
        <strain evidence="8">NOD</strain>
        <tissue evidence="8">Spleen</tissue>
    </source>
</reference>
<reference key="2">
    <citation type="journal article" date="2004" name="Genome Res.">
        <title>The status, quality, and expansion of the NIH full-length cDNA project: the Mammalian Gene Collection (MGC).</title>
        <authorList>
            <consortium name="The MGC Project Team"/>
        </authorList>
    </citation>
    <scope>NUCLEOTIDE SEQUENCE [LARGE SCALE MRNA]</scope>
    <source>
        <tissue>Brain</tissue>
    </source>
</reference>
<reference evidence="7" key="3">
    <citation type="journal article" date="2004" name="Gene Expr. Patterns">
        <title>Drapc1 expression during mouse embryonic development.</title>
        <authorList>
            <person name="Jukkola T."/>
            <person name="Sinjushina N."/>
            <person name="Partanen J."/>
        </authorList>
    </citation>
    <scope>DEVELOPMENTAL STAGE</scope>
</reference>
<feature type="signal peptide" evidence="3">
    <location>
        <begin position="1"/>
        <end position="26"/>
    </location>
</feature>
<feature type="chain" id="PRO_0000227521" description="Protein APCDD1">
    <location>
        <begin position="27"/>
        <end position="514"/>
    </location>
</feature>
<feature type="topological domain" description="Extracellular" evidence="3">
    <location>
        <begin position="27"/>
        <end position="492"/>
    </location>
</feature>
<feature type="transmembrane region" description="Helical" evidence="3">
    <location>
        <begin position="493"/>
        <end position="513"/>
    </location>
</feature>
<feature type="topological domain" description="Cytoplasmic" evidence="3">
    <location>
        <position position="514"/>
    </location>
</feature>
<feature type="region of interest" description="Disordered" evidence="4">
    <location>
        <begin position="437"/>
        <end position="459"/>
    </location>
</feature>
<feature type="glycosylation site" description="N-linked (GlcNAc...) asparagine" evidence="3">
    <location>
        <position position="100"/>
    </location>
</feature>
<feature type="glycosylation site" description="N-linked (GlcNAc...) asparagine" evidence="3">
    <location>
        <position position="168"/>
    </location>
</feature>
<feature type="glycosylation site" description="N-linked (GlcNAc...) asparagine" evidence="3">
    <location>
        <position position="319"/>
    </location>
</feature>
<comment type="function">
    <text evidence="1">Negative regulator of the Wnt signaling pathway. Inhibits Wnt signaling in a cell-autonomous manner and functions upstream of beta-catenin. May act via its interaction with Wnt and LRP proteins (By similarity).</text>
</comment>
<comment type="subunit">
    <text evidence="1">Homodimer. Interacts with LRP5 and WNT3A (By similarity).</text>
</comment>
<comment type="subcellular location">
    <subcellularLocation>
        <location evidence="1">Cell membrane</location>
        <topology evidence="1">Single-pass type I membrane protein</topology>
    </subcellularLocation>
</comment>
<comment type="developmental stage">
    <text evidence="5">Expressed during early development of the extraembryonic structures, nervous system, vascular system and inner ear. Also expressed in mesenchyme of various parts of the embryo and in adult hair follicles.</text>
</comment>
<comment type="induction">
    <text evidence="2">APCDD1 is transcriptionally regulated by the CTNNB1/TF7L2 complex.</text>
</comment>
<comment type="PTM">
    <text evidence="1">N-Glycosylated.</text>
</comment>
<comment type="similarity">
    <text evidence="7">Belongs to the APCDD1 family.</text>
</comment>
<comment type="sequence caution" evidence="7">
    <conflict type="erroneous termination">
        <sequence resource="EMBL-CDS" id="BAE42770"/>
    </conflict>
    <text>Truncated C-terminus.</text>
</comment>
<dbReference type="EMBL" id="AK156319">
    <property type="protein sequence ID" value="BAE33672.1"/>
    <property type="molecule type" value="mRNA"/>
</dbReference>
<dbReference type="EMBL" id="AK172004">
    <property type="protein sequence ID" value="BAE42770.1"/>
    <property type="status" value="ALT_SEQ"/>
    <property type="molecule type" value="mRNA"/>
</dbReference>
<dbReference type="EMBL" id="BC141269">
    <property type="protein sequence ID" value="AAI41270.1"/>
    <property type="molecule type" value="mRNA"/>
</dbReference>
<dbReference type="EMBL" id="BC141270">
    <property type="protein sequence ID" value="AAI41271.1"/>
    <property type="molecule type" value="mRNA"/>
</dbReference>
<dbReference type="CCDS" id="CCDS37843.1"/>
<dbReference type="RefSeq" id="NP_573500.2">
    <property type="nucleotide sequence ID" value="NM_133237.4"/>
</dbReference>
<dbReference type="PDB" id="8E0P">
    <property type="method" value="X-ray"/>
    <property type="resolution" value="2.33 A"/>
    <property type="chains" value="A/B/C/D=46-482"/>
</dbReference>
<dbReference type="PDB" id="8E0R">
    <property type="method" value="X-ray"/>
    <property type="resolution" value="1.95 A"/>
    <property type="chains" value="A/B=27-482"/>
</dbReference>
<dbReference type="PDB" id="8E0W">
    <property type="method" value="X-ray"/>
    <property type="resolution" value="2.15 A"/>
    <property type="chains" value="A/B=27-482"/>
</dbReference>
<dbReference type="PDBsum" id="8E0P"/>
<dbReference type="PDBsum" id="8E0R"/>
<dbReference type="PDBsum" id="8E0W"/>
<dbReference type="SMR" id="Q3U128"/>
<dbReference type="FunCoup" id="Q3U128">
    <property type="interactions" value="1070"/>
</dbReference>
<dbReference type="STRING" id="10090.ENSMUSP00000157539"/>
<dbReference type="GlyCosmos" id="Q3U128">
    <property type="glycosylation" value="3 sites, No reported glycans"/>
</dbReference>
<dbReference type="GlyGen" id="Q3U128">
    <property type="glycosylation" value="3 sites, 1 N-linked glycan (1 site)"/>
</dbReference>
<dbReference type="iPTMnet" id="Q3U128"/>
<dbReference type="PhosphoSitePlus" id="Q3U128"/>
<dbReference type="PaxDb" id="10090-ENSMUSP00000094302"/>
<dbReference type="ProteomicsDB" id="281826"/>
<dbReference type="Antibodypedia" id="2521">
    <property type="antibodies" value="187 antibodies from 25 providers"/>
</dbReference>
<dbReference type="Ensembl" id="ENSMUST00000096554.12">
    <property type="protein sequence ID" value="ENSMUSP00000094302.5"/>
    <property type="gene ID" value="ENSMUSG00000071847.15"/>
</dbReference>
<dbReference type="Ensembl" id="ENSMUST00000236135.2">
    <property type="protein sequence ID" value="ENSMUSP00000157539.2"/>
    <property type="gene ID" value="ENSMUSG00000071847.15"/>
</dbReference>
<dbReference type="GeneID" id="494504"/>
<dbReference type="KEGG" id="mmu:494504"/>
<dbReference type="UCSC" id="uc008fdl.1">
    <property type="organism name" value="mouse"/>
</dbReference>
<dbReference type="AGR" id="MGI:3513977"/>
<dbReference type="CTD" id="147495"/>
<dbReference type="MGI" id="MGI:3513977">
    <property type="gene designation" value="Apcdd1"/>
</dbReference>
<dbReference type="VEuPathDB" id="HostDB:ENSMUSG00000071847"/>
<dbReference type="eggNOG" id="ENOG502QQ0C">
    <property type="taxonomic scope" value="Eukaryota"/>
</dbReference>
<dbReference type="GeneTree" id="ENSGT00640000091492"/>
<dbReference type="HOGENOM" id="CLU_035648_0_0_1"/>
<dbReference type="InParanoid" id="Q3U128"/>
<dbReference type="OMA" id="MPLIQCT"/>
<dbReference type="OrthoDB" id="5985602at2759"/>
<dbReference type="PhylomeDB" id="Q3U128"/>
<dbReference type="TreeFam" id="TF329491"/>
<dbReference type="BioGRID-ORCS" id="494504">
    <property type="hits" value="4 hits in 78 CRISPR screens"/>
</dbReference>
<dbReference type="ChiTaRS" id="Apcdd1">
    <property type="organism name" value="mouse"/>
</dbReference>
<dbReference type="PRO" id="PR:Q3U128"/>
<dbReference type="Proteomes" id="UP000000589">
    <property type="component" value="Chromosome 18"/>
</dbReference>
<dbReference type="RNAct" id="Q3U128">
    <property type="molecule type" value="protein"/>
</dbReference>
<dbReference type="Bgee" id="ENSMUSG00000071847">
    <property type="expression patterns" value="Expressed in brain blood vessel and 292 other cell types or tissues"/>
</dbReference>
<dbReference type="ExpressionAtlas" id="Q3U128">
    <property type="expression patterns" value="baseline and differential"/>
</dbReference>
<dbReference type="GO" id="GO:0005886">
    <property type="term" value="C:plasma membrane"/>
    <property type="evidence" value="ECO:0000250"/>
    <property type="project" value="UniProtKB"/>
</dbReference>
<dbReference type="GO" id="GO:0042802">
    <property type="term" value="F:identical protein binding"/>
    <property type="evidence" value="ECO:0007669"/>
    <property type="project" value="Ensembl"/>
</dbReference>
<dbReference type="GO" id="GO:0017147">
    <property type="term" value="F:Wnt-protein binding"/>
    <property type="evidence" value="ECO:0000250"/>
    <property type="project" value="UniProtKB"/>
</dbReference>
<dbReference type="GO" id="GO:0043615">
    <property type="term" value="P:astrocyte cell migration"/>
    <property type="evidence" value="ECO:0000314"/>
    <property type="project" value="MGI"/>
</dbReference>
<dbReference type="GO" id="GO:0001942">
    <property type="term" value="P:hair follicle development"/>
    <property type="evidence" value="ECO:0007669"/>
    <property type="project" value="Ensembl"/>
</dbReference>
<dbReference type="GO" id="GO:0030178">
    <property type="term" value="P:negative regulation of Wnt signaling pathway"/>
    <property type="evidence" value="ECO:0000250"/>
    <property type="project" value="UniProtKB"/>
</dbReference>
<dbReference type="GO" id="GO:0042487">
    <property type="term" value="P:regulation of odontogenesis of dentin-containing tooth"/>
    <property type="evidence" value="ECO:0000315"/>
    <property type="project" value="CACAO"/>
</dbReference>
<dbReference type="GO" id="GO:0016055">
    <property type="term" value="P:Wnt signaling pathway"/>
    <property type="evidence" value="ECO:0007669"/>
    <property type="project" value="UniProtKB-KW"/>
</dbReference>
<dbReference type="InterPro" id="IPR042425">
    <property type="entry name" value="APCDD1"/>
</dbReference>
<dbReference type="InterPro" id="IPR029405">
    <property type="entry name" value="APCDD1_dom"/>
</dbReference>
<dbReference type="PANTHER" id="PTHR31021">
    <property type="entry name" value="ADENOMATOSIS POLYPOSIS COLI DOWN-REGULATED 1"/>
    <property type="match status" value="1"/>
</dbReference>
<dbReference type="PANTHER" id="PTHR31021:SF2">
    <property type="entry name" value="PROTEIN APCDD1"/>
    <property type="match status" value="1"/>
</dbReference>
<dbReference type="Pfam" id="PF14921">
    <property type="entry name" value="APCDDC"/>
    <property type="match status" value="2"/>
</dbReference>
<dbReference type="SMART" id="SM01352">
    <property type="entry name" value="APCDDC"/>
    <property type="match status" value="2"/>
</dbReference>
<accession>Q3U128</accession>
<accession>B2RUN4</accession>
<accession>Q3TA99</accession>
<keyword id="KW-0002">3D-structure</keyword>
<keyword id="KW-1003">Cell membrane</keyword>
<keyword id="KW-0325">Glycoprotein</keyword>
<keyword id="KW-0472">Membrane</keyword>
<keyword id="KW-1185">Reference proteome</keyword>
<keyword id="KW-0732">Signal</keyword>
<keyword id="KW-0812">Transmembrane</keyword>
<keyword id="KW-1133">Transmembrane helix</keyword>
<keyword id="KW-0879">Wnt signaling pathway</keyword>
<name>APCD1_MOUSE</name>
<gene>
    <name evidence="9" type="primary">Apcdd1</name>
    <name evidence="6" type="synonym">Drapc1</name>
</gene>
<organism>
    <name type="scientific">Mus musculus</name>
    <name type="common">Mouse</name>
    <dbReference type="NCBI Taxonomy" id="10090"/>
    <lineage>
        <taxon>Eukaryota</taxon>
        <taxon>Metazoa</taxon>
        <taxon>Chordata</taxon>
        <taxon>Craniata</taxon>
        <taxon>Vertebrata</taxon>
        <taxon>Euteleostomi</taxon>
        <taxon>Mammalia</taxon>
        <taxon>Eutheria</taxon>
        <taxon>Euarchontoglires</taxon>
        <taxon>Glires</taxon>
        <taxon>Rodentia</taxon>
        <taxon>Myomorpha</taxon>
        <taxon>Muroidea</taxon>
        <taxon>Muridae</taxon>
        <taxon>Murinae</taxon>
        <taxon>Mus</taxon>
        <taxon>Mus</taxon>
    </lineage>
</organism>
<sequence length="514" mass="58638">MSRVRRLLLGYLFPALLLHGLGEGSALLHPDSRSHPRSLEKSAWRAFKESQCHHMLKHLHNGARITVQMPPTIEGHWVSTGCEVRSGPEFMTRSYRFYNNNTFKAYQFYYGSNRCTNPTYTLIIRGKIRLRQASWIIRGGTEADYQLHGVQVICHTEAVAEQLSRLVNRTCPGFLAPGGPWVQDVAYDLWQEESNHECTKAVNFAMHELQLIRVEKQYPHHSLDHLVEELFLGDIHTDATQRVFYRPSSYQPPLQNAKNHNHACIACRIIFRSDEHHPPILPPKADLTIGLHGEWVSQRCEVRPEVLFLTRHFIFHDNNNTWEGHYYHYSDPVCKHPTFTIYARGRYSRGVLSSKVMGGTEFVFKVNHMKVTPMDAATASLLNVFSGNECGAEGSWQVGIQQDVTHTNGCVALGIKLPHTEYEIFKMEQDTRGRYLLFNGQRPSDGSSPDRPEKRATSYQMPLVQCASSSPRAEELLEDSQGHLYGRAAGRTAGSLLLPAFVSLWTLPHWRILR</sequence>
<protein>
    <recommendedName>
        <fullName>Protein APCDD1</fullName>
    </recommendedName>
    <alternativeName>
        <fullName>Adenomatosis polyposis coli down-regulated 1 protein homolog</fullName>
    </alternativeName>
</protein>
<evidence type="ECO:0000250" key="1"/>
<evidence type="ECO:0000250" key="2">
    <source>
        <dbReference type="UniProtKB" id="Q8J025"/>
    </source>
</evidence>
<evidence type="ECO:0000255" key="3"/>
<evidence type="ECO:0000256" key="4">
    <source>
        <dbReference type="SAM" id="MobiDB-lite"/>
    </source>
</evidence>
<evidence type="ECO:0000269" key="5">
    <source>
    </source>
</evidence>
<evidence type="ECO:0000303" key="6">
    <source>
    </source>
</evidence>
<evidence type="ECO:0000305" key="7"/>
<evidence type="ECO:0000312" key="8">
    <source>
        <dbReference type="EMBL" id="BAE33672.1"/>
    </source>
</evidence>
<evidence type="ECO:0000312" key="9">
    <source>
        <dbReference type="MGI" id="MGI:3513977"/>
    </source>
</evidence>